<name>BLAC_MYCBO</name>
<evidence type="ECO:0000250" key="1">
    <source>
        <dbReference type="UniProtKB" id="A5U493"/>
    </source>
</evidence>
<evidence type="ECO:0000250" key="2">
    <source>
        <dbReference type="UniProtKB" id="P9WKD3"/>
    </source>
</evidence>
<evidence type="ECO:0000255" key="3">
    <source>
        <dbReference type="PROSITE-ProRule" id="PRU00648"/>
    </source>
</evidence>
<evidence type="ECO:0000305" key="4"/>
<evidence type="ECO:0000305" key="5">
    <source>
    </source>
</evidence>
<reference key="1">
    <citation type="journal article" date="2003" name="Proc. Natl. Acad. Sci. U.S.A.">
        <title>The complete genome sequence of Mycobacterium bovis.</title>
        <authorList>
            <person name="Garnier T."/>
            <person name="Eiglmeier K."/>
            <person name="Camus J.-C."/>
            <person name="Medina N."/>
            <person name="Mansoor H."/>
            <person name="Pryor M."/>
            <person name="Duthoy S."/>
            <person name="Grondin S."/>
            <person name="Lacroix C."/>
            <person name="Monsempe C."/>
            <person name="Simon S."/>
            <person name="Harris B."/>
            <person name="Atkin R."/>
            <person name="Doggett J."/>
            <person name="Mayes R."/>
            <person name="Keating L."/>
            <person name="Wheeler P.R."/>
            <person name="Parkhill J."/>
            <person name="Barrell B.G."/>
            <person name="Cole S.T."/>
            <person name="Gordon S.V."/>
            <person name="Hewinson R.G."/>
        </authorList>
    </citation>
    <scope>NUCLEOTIDE SEQUENCE [LARGE SCALE GENOMIC DNA]</scope>
    <source>
        <strain>ATCC BAA-935 / AF2122/97</strain>
    </source>
</reference>
<reference key="2">
    <citation type="journal article" date="2017" name="Genome Announc.">
        <title>Updated reference genome sequence and annotation of Mycobacterium bovis AF2122/97.</title>
        <authorList>
            <person name="Malone K.M."/>
            <person name="Farrell D."/>
            <person name="Stuber T.P."/>
            <person name="Schubert O.T."/>
            <person name="Aebersold R."/>
            <person name="Robbe-Austerman S."/>
            <person name="Gordon S.V."/>
        </authorList>
    </citation>
    <scope>NUCLEOTIDE SEQUENCE [LARGE SCALE GENOMIC DNA]</scope>
    <scope>GENOME REANNOTATION</scope>
    <source>
        <strain>ATCC BAA-935 / AF2122/97</strain>
    </source>
</reference>
<reference key="3">
    <citation type="journal article" date="1991" name="Biochem. J.">
        <title>A standard numbering scheme for the class A beta-lactamases.</title>
        <authorList>
            <person name="Ambler R.P."/>
            <person name="Coulson A.F."/>
            <person name="Frere J.M."/>
            <person name="Ghuysen J.M."/>
            <person name="Joris B."/>
            <person name="Forsman M."/>
            <person name="Levesque R.C."/>
            <person name="Tiraby G."/>
            <person name="Waley S.G."/>
        </authorList>
    </citation>
    <scope>AMINO ACID NUMBERING SCHEME</scope>
</reference>
<accession>P0A5I7</accession>
<accession>A0A1R3Y039</accession>
<accession>Q10670</accession>
<accession>X2BJD5</accession>
<comment type="function">
    <text evidence="2">Extended spectrum beta-lactamase (ESBL) that inactivates beta-lactam antibiotics by hydrolyzing the amide group of the beta-lactam ring. Displays high levels of penicillinase and cephalosporinase activity as well as measurable activity with carbapenems, including imipenem and meropenem. Plays a primary role in the intrinsic resistance of mycobacteria to beta-lactam antibiotics.</text>
</comment>
<comment type="catalytic activity">
    <reaction evidence="2">
        <text>a beta-lactam + H2O = a substituted beta-amino acid</text>
        <dbReference type="Rhea" id="RHEA:20401"/>
        <dbReference type="ChEBI" id="CHEBI:15377"/>
        <dbReference type="ChEBI" id="CHEBI:35627"/>
        <dbReference type="ChEBI" id="CHEBI:140347"/>
        <dbReference type="EC" id="3.5.2.6"/>
    </reaction>
</comment>
<comment type="activity regulation">
    <text evidence="2">Is inhibited by clavulanate.</text>
</comment>
<comment type="subunit">
    <text evidence="2">Monomer.</text>
</comment>
<comment type="subcellular location">
    <subcellularLocation>
        <location evidence="2">Periplasm</location>
    </subcellularLocation>
    <subcellularLocation>
        <location evidence="1">Secreted</location>
    </subcellularLocation>
</comment>
<comment type="PTM">
    <text evidence="2">Exported by the Tat system. The position of the signal peptide cleavage has not been experimentally proven.</text>
</comment>
<comment type="miscellaneous">
    <text evidence="5">The class A beta-lactamase family has a specific amino-acid numbering system, sometimes called Ambler or ABL numbering and often misspelt as Amber. A multiple sequence alignment was used to derive a consensus sequence and then the consensus was numbered taking into account insertions and deletions. This allows use of identical numbers, e.g. for active site residues, despite differences in protein length. UniProt always uses natural numbering of residues, hence there appear to be differences in numbering between this entry and some papers.</text>
</comment>
<comment type="similarity">
    <text evidence="4">Belongs to the class-A beta-lactamase family.</text>
</comment>
<protein>
    <recommendedName>
        <fullName evidence="2">Beta-lactamase</fullName>
        <ecNumber evidence="2">3.5.2.6</ecNumber>
    </recommendedName>
    <alternativeName>
        <fullName evidence="2">Ambler class A beta-lactamase</fullName>
    </alternativeName>
</protein>
<gene>
    <name type="primary">blaC</name>
    <name type="synonym">blaA</name>
    <name type="ordered locus">BQ2027_MB2094C</name>
</gene>
<proteinExistence type="inferred from homology"/>
<sequence>MRNRGFGRRELLVAMAMLVSVTGCARHASGARPASTTLPAGADLADRFAELERRYDARLGVYVPATGTTAAIEYRADERFAFCSTFKAPLVAAVLHQNPLTHLDKLITYTSDDIRSISPVAQQHVQTGMTIGQLCDAAIRYSDGTAANLLLADLGGPGGGTAAFTGYLRSLGDTVSRLDAEEPELNRDPPGDERDTTTPHAIALVLQQLVLGNALPPDKRALLTDWMARNTTGAKRIRAGFPADWKVIDKTGTGDYGRANDIAVVWSPTGVPYVVAVMSDRAGGGYDAEPREALLAEAATCVAGVLA</sequence>
<organism>
    <name type="scientific">Mycobacterium bovis (strain ATCC BAA-935 / AF2122/97)</name>
    <dbReference type="NCBI Taxonomy" id="233413"/>
    <lineage>
        <taxon>Bacteria</taxon>
        <taxon>Bacillati</taxon>
        <taxon>Actinomycetota</taxon>
        <taxon>Actinomycetes</taxon>
        <taxon>Mycobacteriales</taxon>
        <taxon>Mycobacteriaceae</taxon>
        <taxon>Mycobacterium</taxon>
        <taxon>Mycobacterium tuberculosis complex</taxon>
    </lineage>
</organism>
<feature type="signal peptide" description="Tat-type signal" evidence="3">
    <location>
        <begin position="1"/>
        <end position="34"/>
    </location>
</feature>
<feature type="chain" id="PRO_0000017004" description="Beta-lactamase">
    <location>
        <begin position="35"/>
        <end position="307"/>
    </location>
</feature>
<feature type="active site" description="Acyl-ester intermediate" evidence="2">
    <location>
        <position position="84"/>
    </location>
</feature>
<feature type="active site" description="Proton acceptor" evidence="2">
    <location>
        <position position="182"/>
    </location>
</feature>
<feature type="binding site" evidence="2">
    <location>
        <position position="142"/>
    </location>
    <ligand>
        <name>substrate</name>
    </ligand>
</feature>
<feature type="binding site" evidence="2">
    <location>
        <begin position="251"/>
        <end position="253"/>
    </location>
    <ligand>
        <name>substrate</name>
    </ligand>
</feature>
<feature type="site" description="Increases nucleophilicity of active site Ser" evidence="2">
    <location>
        <position position="87"/>
    </location>
</feature>
<feature type="site" description="Functions as a gatekeeper residue that regulates substrate accessibility to the enzyme active site" evidence="2">
    <location>
        <position position="117"/>
    </location>
</feature>
<keyword id="KW-0046">Antibiotic resistance</keyword>
<keyword id="KW-0378">Hydrolase</keyword>
<keyword id="KW-0574">Periplasm</keyword>
<keyword id="KW-1185">Reference proteome</keyword>
<keyword id="KW-0964">Secreted</keyword>
<keyword id="KW-0732">Signal</keyword>
<dbReference type="EC" id="3.5.2.6" evidence="2"/>
<dbReference type="EMBL" id="LT708304">
    <property type="protein sequence ID" value="SIU00701.1"/>
    <property type="molecule type" value="Genomic_DNA"/>
</dbReference>
<dbReference type="RefSeq" id="NP_855744.1">
    <property type="nucleotide sequence ID" value="NC_002945.3"/>
</dbReference>
<dbReference type="RefSeq" id="WP_003410677.1">
    <property type="nucleotide sequence ID" value="NC_002945.4"/>
</dbReference>
<dbReference type="SMR" id="P0A5I7"/>
<dbReference type="GeneID" id="45426045"/>
<dbReference type="KEGG" id="mbo:BQ2027_MB2094C"/>
<dbReference type="PATRIC" id="fig|233413.5.peg.2303"/>
<dbReference type="Proteomes" id="UP000001419">
    <property type="component" value="Chromosome"/>
</dbReference>
<dbReference type="GO" id="GO:0005576">
    <property type="term" value="C:extracellular region"/>
    <property type="evidence" value="ECO:0007669"/>
    <property type="project" value="UniProtKB-SubCell"/>
</dbReference>
<dbReference type="GO" id="GO:0042597">
    <property type="term" value="C:periplasmic space"/>
    <property type="evidence" value="ECO:0007669"/>
    <property type="project" value="UniProtKB-SubCell"/>
</dbReference>
<dbReference type="GO" id="GO:0008800">
    <property type="term" value="F:beta-lactamase activity"/>
    <property type="evidence" value="ECO:0007669"/>
    <property type="project" value="UniProtKB-EC"/>
</dbReference>
<dbReference type="GO" id="GO:0030655">
    <property type="term" value="P:beta-lactam antibiotic catabolic process"/>
    <property type="evidence" value="ECO:0007669"/>
    <property type="project" value="InterPro"/>
</dbReference>
<dbReference type="GO" id="GO:0046677">
    <property type="term" value="P:response to antibiotic"/>
    <property type="evidence" value="ECO:0007669"/>
    <property type="project" value="UniProtKB-KW"/>
</dbReference>
<dbReference type="FunFam" id="3.40.710.10:FF:000033">
    <property type="entry name" value="Beta-lactamase"/>
    <property type="match status" value="1"/>
</dbReference>
<dbReference type="Gene3D" id="3.40.710.10">
    <property type="entry name" value="DD-peptidase/beta-lactamase superfamily"/>
    <property type="match status" value="1"/>
</dbReference>
<dbReference type="InterPro" id="IPR012338">
    <property type="entry name" value="Beta-lactam/transpept-like"/>
</dbReference>
<dbReference type="InterPro" id="IPR045155">
    <property type="entry name" value="Beta-lactam_cat"/>
</dbReference>
<dbReference type="InterPro" id="IPR000871">
    <property type="entry name" value="Beta-lactam_class-A"/>
</dbReference>
<dbReference type="InterPro" id="IPR023650">
    <property type="entry name" value="Beta-lactam_class-A_AS"/>
</dbReference>
<dbReference type="NCBIfam" id="NF033103">
    <property type="entry name" value="bla_class_A"/>
    <property type="match status" value="1"/>
</dbReference>
<dbReference type="NCBIfam" id="NF041154">
    <property type="entry name" value="MTB_classA_BlaC"/>
    <property type="match status" value="1"/>
</dbReference>
<dbReference type="PANTHER" id="PTHR35333">
    <property type="entry name" value="BETA-LACTAMASE"/>
    <property type="match status" value="1"/>
</dbReference>
<dbReference type="PANTHER" id="PTHR35333:SF3">
    <property type="entry name" value="BETA-LACTAMASE-TYPE TRANSPEPTIDASE FOLD CONTAINING PROTEIN"/>
    <property type="match status" value="1"/>
</dbReference>
<dbReference type="Pfam" id="PF13354">
    <property type="entry name" value="Beta-lactamase2"/>
    <property type="match status" value="1"/>
</dbReference>
<dbReference type="PRINTS" id="PR00118">
    <property type="entry name" value="BLACTAMASEA"/>
</dbReference>
<dbReference type="SUPFAM" id="SSF56601">
    <property type="entry name" value="beta-lactamase/transpeptidase-like"/>
    <property type="match status" value="1"/>
</dbReference>
<dbReference type="PROSITE" id="PS00146">
    <property type="entry name" value="BETA_LACTAMASE_A"/>
    <property type="match status" value="1"/>
</dbReference>